<evidence type="ECO:0000255" key="1">
    <source>
        <dbReference type="HAMAP-Rule" id="MF_00082"/>
    </source>
</evidence>
<dbReference type="EC" id="2.7.2.8" evidence="1"/>
<dbReference type="EMBL" id="CP000821">
    <property type="protein sequence ID" value="ABV38879.1"/>
    <property type="molecule type" value="Genomic_DNA"/>
</dbReference>
<dbReference type="SMR" id="A8G1A6"/>
<dbReference type="STRING" id="425104.Ssed_4275"/>
<dbReference type="KEGG" id="sse:Ssed_4275"/>
<dbReference type="eggNOG" id="COG0548">
    <property type="taxonomic scope" value="Bacteria"/>
</dbReference>
<dbReference type="HOGENOM" id="CLU_053680_1_1_6"/>
<dbReference type="UniPathway" id="UPA00068">
    <property type="reaction ID" value="UER00107"/>
</dbReference>
<dbReference type="Proteomes" id="UP000002015">
    <property type="component" value="Chromosome"/>
</dbReference>
<dbReference type="GO" id="GO:0005737">
    <property type="term" value="C:cytoplasm"/>
    <property type="evidence" value="ECO:0007669"/>
    <property type="project" value="UniProtKB-SubCell"/>
</dbReference>
<dbReference type="GO" id="GO:0003991">
    <property type="term" value="F:acetylglutamate kinase activity"/>
    <property type="evidence" value="ECO:0007669"/>
    <property type="project" value="UniProtKB-UniRule"/>
</dbReference>
<dbReference type="GO" id="GO:0005524">
    <property type="term" value="F:ATP binding"/>
    <property type="evidence" value="ECO:0007669"/>
    <property type="project" value="UniProtKB-UniRule"/>
</dbReference>
<dbReference type="GO" id="GO:0042450">
    <property type="term" value="P:arginine biosynthetic process via ornithine"/>
    <property type="evidence" value="ECO:0007669"/>
    <property type="project" value="UniProtKB-UniRule"/>
</dbReference>
<dbReference type="GO" id="GO:0006526">
    <property type="term" value="P:L-arginine biosynthetic process"/>
    <property type="evidence" value="ECO:0007669"/>
    <property type="project" value="UniProtKB-UniPathway"/>
</dbReference>
<dbReference type="Gene3D" id="3.40.1160.10">
    <property type="entry name" value="Acetylglutamate kinase-like"/>
    <property type="match status" value="1"/>
</dbReference>
<dbReference type="HAMAP" id="MF_00082">
    <property type="entry name" value="ArgB"/>
    <property type="match status" value="1"/>
</dbReference>
<dbReference type="InterPro" id="IPR036393">
    <property type="entry name" value="AceGlu_kinase-like_sf"/>
</dbReference>
<dbReference type="InterPro" id="IPR004662">
    <property type="entry name" value="AcgluKinase_fam"/>
</dbReference>
<dbReference type="InterPro" id="IPR037528">
    <property type="entry name" value="ArgB"/>
</dbReference>
<dbReference type="InterPro" id="IPR001048">
    <property type="entry name" value="Asp/Glu/Uridylate_kinase"/>
</dbReference>
<dbReference type="NCBIfam" id="TIGR00761">
    <property type="entry name" value="argB"/>
    <property type="match status" value="1"/>
</dbReference>
<dbReference type="PANTHER" id="PTHR23342">
    <property type="entry name" value="N-ACETYLGLUTAMATE SYNTHASE"/>
    <property type="match status" value="1"/>
</dbReference>
<dbReference type="PANTHER" id="PTHR23342:SF0">
    <property type="entry name" value="N-ACETYLGLUTAMATE SYNTHASE, MITOCHONDRIAL"/>
    <property type="match status" value="1"/>
</dbReference>
<dbReference type="Pfam" id="PF00696">
    <property type="entry name" value="AA_kinase"/>
    <property type="match status" value="1"/>
</dbReference>
<dbReference type="PIRSF" id="PIRSF000728">
    <property type="entry name" value="NAGK"/>
    <property type="match status" value="1"/>
</dbReference>
<dbReference type="SUPFAM" id="SSF53633">
    <property type="entry name" value="Carbamate kinase-like"/>
    <property type="match status" value="1"/>
</dbReference>
<keyword id="KW-0028">Amino-acid biosynthesis</keyword>
<keyword id="KW-0055">Arginine biosynthesis</keyword>
<keyword id="KW-0067">ATP-binding</keyword>
<keyword id="KW-0963">Cytoplasm</keyword>
<keyword id="KW-0418">Kinase</keyword>
<keyword id="KW-0547">Nucleotide-binding</keyword>
<keyword id="KW-1185">Reference proteome</keyword>
<keyword id="KW-0808">Transferase</keyword>
<reference key="1">
    <citation type="submission" date="2007-08" db="EMBL/GenBank/DDBJ databases">
        <title>Complete sequence of Shewanella sediminis HAW-EB3.</title>
        <authorList>
            <consortium name="US DOE Joint Genome Institute"/>
            <person name="Copeland A."/>
            <person name="Lucas S."/>
            <person name="Lapidus A."/>
            <person name="Barry K."/>
            <person name="Glavina del Rio T."/>
            <person name="Dalin E."/>
            <person name="Tice H."/>
            <person name="Pitluck S."/>
            <person name="Chertkov O."/>
            <person name="Brettin T."/>
            <person name="Bruce D."/>
            <person name="Detter J.C."/>
            <person name="Han C."/>
            <person name="Schmutz J."/>
            <person name="Larimer F."/>
            <person name="Land M."/>
            <person name="Hauser L."/>
            <person name="Kyrpides N."/>
            <person name="Kim E."/>
            <person name="Zhao J.-S."/>
            <person name="Richardson P."/>
        </authorList>
    </citation>
    <scope>NUCLEOTIDE SEQUENCE [LARGE SCALE GENOMIC DNA]</scope>
    <source>
        <strain>HAW-EB3</strain>
    </source>
</reference>
<comment type="function">
    <text evidence="1">Catalyzes the ATP-dependent phosphorylation of N-acetyl-L-glutamate.</text>
</comment>
<comment type="catalytic activity">
    <reaction evidence="1">
        <text>N-acetyl-L-glutamate + ATP = N-acetyl-L-glutamyl 5-phosphate + ADP</text>
        <dbReference type="Rhea" id="RHEA:14629"/>
        <dbReference type="ChEBI" id="CHEBI:30616"/>
        <dbReference type="ChEBI" id="CHEBI:44337"/>
        <dbReference type="ChEBI" id="CHEBI:57936"/>
        <dbReference type="ChEBI" id="CHEBI:456216"/>
        <dbReference type="EC" id="2.7.2.8"/>
    </reaction>
</comment>
<comment type="pathway">
    <text evidence="1">Amino-acid biosynthesis; L-arginine biosynthesis; N(2)-acetyl-L-ornithine from L-glutamate: step 2/4.</text>
</comment>
<comment type="subcellular location">
    <subcellularLocation>
        <location evidence="1">Cytoplasm</location>
    </subcellularLocation>
</comment>
<comment type="similarity">
    <text evidence="1">Belongs to the acetylglutamate kinase family. ArgB subfamily.</text>
</comment>
<protein>
    <recommendedName>
        <fullName evidence="1">Acetylglutamate kinase</fullName>
        <ecNumber evidence="1">2.7.2.8</ecNumber>
    </recommendedName>
    <alternativeName>
        <fullName evidence="1">N-acetyl-L-glutamate 5-phosphotransferase</fullName>
    </alternativeName>
    <alternativeName>
        <fullName evidence="1">NAG kinase</fullName>
        <shortName evidence="1">NAGK</shortName>
    </alternativeName>
</protein>
<gene>
    <name evidence="1" type="primary">argB</name>
    <name type="ordered locus">Ssed_4275</name>
</gene>
<sequence length="263" mass="27383">MTMSVNKSTLVLKVGGALMQCEMGMARLMETAAKMIASGQQLIMVHGGGCLVEEQLTANGMTTEKLDGLRVTPQEQVPVIVGALAGTSNKILQGAAIKAGVTCVGMSLGDGDMVSAKVKDPRLGFVGEVSPKSATYLEFILSQGWMPIVSSIAIDAAGQLLNVNADQAATVLAKLVDGKLVLLSDVSGVLDGKGQLIKSLNRSQVEELTNIGVIEKGMKVKVEAALEVAESMGQPVQVASWRHAEQLIALSNGEAVGTQIQPD</sequence>
<feature type="chain" id="PRO_0000335664" description="Acetylglutamate kinase">
    <location>
        <begin position="1"/>
        <end position="263"/>
    </location>
</feature>
<feature type="binding site" evidence="1">
    <location>
        <begin position="48"/>
        <end position="49"/>
    </location>
    <ligand>
        <name>substrate</name>
    </ligand>
</feature>
<feature type="binding site" evidence="1">
    <location>
        <position position="70"/>
    </location>
    <ligand>
        <name>substrate</name>
    </ligand>
</feature>
<feature type="binding site" evidence="1">
    <location>
        <position position="162"/>
    </location>
    <ligand>
        <name>substrate</name>
    </ligand>
</feature>
<feature type="site" description="Transition state stabilizer" evidence="1">
    <location>
        <position position="13"/>
    </location>
</feature>
<feature type="site" description="Transition state stabilizer" evidence="1">
    <location>
        <position position="221"/>
    </location>
</feature>
<accession>A8G1A6</accession>
<name>ARGB_SHESH</name>
<proteinExistence type="inferred from homology"/>
<organism>
    <name type="scientific">Shewanella sediminis (strain HAW-EB3)</name>
    <dbReference type="NCBI Taxonomy" id="425104"/>
    <lineage>
        <taxon>Bacteria</taxon>
        <taxon>Pseudomonadati</taxon>
        <taxon>Pseudomonadota</taxon>
        <taxon>Gammaproteobacteria</taxon>
        <taxon>Alteromonadales</taxon>
        <taxon>Shewanellaceae</taxon>
        <taxon>Shewanella</taxon>
    </lineage>
</organism>